<accession>Q5P838</accession>
<gene>
    <name evidence="1" type="primary">dapA</name>
    <name type="ordered locus">AZOSEA04010</name>
    <name type="ORF">ebA774</name>
</gene>
<organism>
    <name type="scientific">Aromatoleum aromaticum (strain DSM 19018 / LMG 30748 / EbN1)</name>
    <name type="common">Azoarcus sp. (strain EbN1)</name>
    <dbReference type="NCBI Taxonomy" id="76114"/>
    <lineage>
        <taxon>Bacteria</taxon>
        <taxon>Pseudomonadati</taxon>
        <taxon>Pseudomonadota</taxon>
        <taxon>Betaproteobacteria</taxon>
        <taxon>Rhodocyclales</taxon>
        <taxon>Rhodocyclaceae</taxon>
        <taxon>Aromatoleum</taxon>
    </lineage>
</organism>
<feature type="chain" id="PRO_1000050163" description="4-hydroxy-tetrahydrodipicolinate synthase">
    <location>
        <begin position="1"/>
        <end position="292"/>
    </location>
</feature>
<feature type="active site" description="Proton donor/acceptor" evidence="1">
    <location>
        <position position="133"/>
    </location>
</feature>
<feature type="active site" description="Schiff-base intermediate with substrate" evidence="1">
    <location>
        <position position="161"/>
    </location>
</feature>
<feature type="binding site" evidence="1">
    <location>
        <position position="45"/>
    </location>
    <ligand>
        <name>pyruvate</name>
        <dbReference type="ChEBI" id="CHEBI:15361"/>
    </ligand>
</feature>
<feature type="binding site" evidence="1">
    <location>
        <position position="203"/>
    </location>
    <ligand>
        <name>pyruvate</name>
        <dbReference type="ChEBI" id="CHEBI:15361"/>
    </ligand>
</feature>
<feature type="site" description="Part of a proton relay during catalysis" evidence="1">
    <location>
        <position position="44"/>
    </location>
</feature>
<feature type="site" description="Part of a proton relay during catalysis" evidence="1">
    <location>
        <position position="107"/>
    </location>
</feature>
<keyword id="KW-0028">Amino-acid biosynthesis</keyword>
<keyword id="KW-0963">Cytoplasm</keyword>
<keyword id="KW-0220">Diaminopimelate biosynthesis</keyword>
<keyword id="KW-0456">Lyase</keyword>
<keyword id="KW-0457">Lysine biosynthesis</keyword>
<keyword id="KW-1185">Reference proteome</keyword>
<keyword id="KW-0704">Schiff base</keyword>
<reference key="1">
    <citation type="journal article" date="2005" name="Arch. Microbiol.">
        <title>The genome sequence of an anaerobic aromatic-degrading denitrifying bacterium, strain EbN1.</title>
        <authorList>
            <person name="Rabus R."/>
            <person name="Kube M."/>
            <person name="Heider J."/>
            <person name="Beck A."/>
            <person name="Heitmann K."/>
            <person name="Widdel F."/>
            <person name="Reinhardt R."/>
        </authorList>
    </citation>
    <scope>NUCLEOTIDE SEQUENCE [LARGE SCALE GENOMIC DNA]</scope>
    <source>
        <strain>DSM 19018 / LMG 30748 / EbN1</strain>
    </source>
</reference>
<dbReference type="EC" id="4.3.3.7" evidence="1"/>
<dbReference type="EMBL" id="CR555306">
    <property type="protein sequence ID" value="CAI06523.1"/>
    <property type="molecule type" value="Genomic_DNA"/>
</dbReference>
<dbReference type="RefSeq" id="WP_011236257.1">
    <property type="nucleotide sequence ID" value="NC_006513.1"/>
</dbReference>
<dbReference type="SMR" id="Q5P838"/>
<dbReference type="STRING" id="76114.ebA774"/>
<dbReference type="KEGG" id="eba:ebA774"/>
<dbReference type="eggNOG" id="COG0329">
    <property type="taxonomic scope" value="Bacteria"/>
</dbReference>
<dbReference type="HOGENOM" id="CLU_049343_7_1_4"/>
<dbReference type="OrthoDB" id="9782828at2"/>
<dbReference type="UniPathway" id="UPA00034">
    <property type="reaction ID" value="UER00017"/>
</dbReference>
<dbReference type="Proteomes" id="UP000006552">
    <property type="component" value="Chromosome"/>
</dbReference>
<dbReference type="GO" id="GO:0005829">
    <property type="term" value="C:cytosol"/>
    <property type="evidence" value="ECO:0007669"/>
    <property type="project" value="TreeGrafter"/>
</dbReference>
<dbReference type="GO" id="GO:0008840">
    <property type="term" value="F:4-hydroxy-tetrahydrodipicolinate synthase activity"/>
    <property type="evidence" value="ECO:0007669"/>
    <property type="project" value="UniProtKB-UniRule"/>
</dbReference>
<dbReference type="GO" id="GO:0019877">
    <property type="term" value="P:diaminopimelate biosynthetic process"/>
    <property type="evidence" value="ECO:0007669"/>
    <property type="project" value="UniProtKB-UniRule"/>
</dbReference>
<dbReference type="GO" id="GO:0009089">
    <property type="term" value="P:lysine biosynthetic process via diaminopimelate"/>
    <property type="evidence" value="ECO:0007669"/>
    <property type="project" value="UniProtKB-UniRule"/>
</dbReference>
<dbReference type="CDD" id="cd00950">
    <property type="entry name" value="DHDPS"/>
    <property type="match status" value="1"/>
</dbReference>
<dbReference type="Gene3D" id="3.20.20.70">
    <property type="entry name" value="Aldolase class I"/>
    <property type="match status" value="1"/>
</dbReference>
<dbReference type="HAMAP" id="MF_00418">
    <property type="entry name" value="DapA"/>
    <property type="match status" value="1"/>
</dbReference>
<dbReference type="InterPro" id="IPR013785">
    <property type="entry name" value="Aldolase_TIM"/>
</dbReference>
<dbReference type="InterPro" id="IPR005263">
    <property type="entry name" value="DapA"/>
</dbReference>
<dbReference type="InterPro" id="IPR002220">
    <property type="entry name" value="DapA-like"/>
</dbReference>
<dbReference type="InterPro" id="IPR020625">
    <property type="entry name" value="Schiff_base-form_aldolases_AS"/>
</dbReference>
<dbReference type="InterPro" id="IPR020624">
    <property type="entry name" value="Schiff_base-form_aldolases_CS"/>
</dbReference>
<dbReference type="NCBIfam" id="TIGR00674">
    <property type="entry name" value="dapA"/>
    <property type="match status" value="1"/>
</dbReference>
<dbReference type="PANTHER" id="PTHR12128:SF66">
    <property type="entry name" value="4-HYDROXY-2-OXOGLUTARATE ALDOLASE, MITOCHONDRIAL"/>
    <property type="match status" value="1"/>
</dbReference>
<dbReference type="PANTHER" id="PTHR12128">
    <property type="entry name" value="DIHYDRODIPICOLINATE SYNTHASE"/>
    <property type="match status" value="1"/>
</dbReference>
<dbReference type="Pfam" id="PF00701">
    <property type="entry name" value="DHDPS"/>
    <property type="match status" value="1"/>
</dbReference>
<dbReference type="PIRSF" id="PIRSF001365">
    <property type="entry name" value="DHDPS"/>
    <property type="match status" value="1"/>
</dbReference>
<dbReference type="PRINTS" id="PR00146">
    <property type="entry name" value="DHPICSNTHASE"/>
</dbReference>
<dbReference type="SMART" id="SM01130">
    <property type="entry name" value="DHDPS"/>
    <property type="match status" value="1"/>
</dbReference>
<dbReference type="SUPFAM" id="SSF51569">
    <property type="entry name" value="Aldolase"/>
    <property type="match status" value="1"/>
</dbReference>
<dbReference type="PROSITE" id="PS00665">
    <property type="entry name" value="DHDPS_1"/>
    <property type="match status" value="1"/>
</dbReference>
<dbReference type="PROSITE" id="PS00666">
    <property type="entry name" value="DHDPS_2"/>
    <property type="match status" value="1"/>
</dbReference>
<proteinExistence type="inferred from homology"/>
<evidence type="ECO:0000255" key="1">
    <source>
        <dbReference type="HAMAP-Rule" id="MF_00418"/>
    </source>
</evidence>
<evidence type="ECO:0000305" key="2"/>
<comment type="function">
    <text evidence="1">Catalyzes the condensation of (S)-aspartate-beta-semialdehyde [(S)-ASA] and pyruvate to 4-hydroxy-tetrahydrodipicolinate (HTPA).</text>
</comment>
<comment type="catalytic activity">
    <reaction evidence="1">
        <text>L-aspartate 4-semialdehyde + pyruvate = (2S,4S)-4-hydroxy-2,3,4,5-tetrahydrodipicolinate + H2O + H(+)</text>
        <dbReference type="Rhea" id="RHEA:34171"/>
        <dbReference type="ChEBI" id="CHEBI:15361"/>
        <dbReference type="ChEBI" id="CHEBI:15377"/>
        <dbReference type="ChEBI" id="CHEBI:15378"/>
        <dbReference type="ChEBI" id="CHEBI:67139"/>
        <dbReference type="ChEBI" id="CHEBI:537519"/>
        <dbReference type="EC" id="4.3.3.7"/>
    </reaction>
</comment>
<comment type="pathway">
    <text evidence="1">Amino-acid biosynthesis; L-lysine biosynthesis via DAP pathway; (S)-tetrahydrodipicolinate from L-aspartate: step 3/4.</text>
</comment>
<comment type="subunit">
    <text evidence="1">Homotetramer; dimer of dimers.</text>
</comment>
<comment type="subcellular location">
    <subcellularLocation>
        <location evidence="1">Cytoplasm</location>
    </subcellularLocation>
</comment>
<comment type="similarity">
    <text evidence="1">Belongs to the DapA family.</text>
</comment>
<comment type="caution">
    <text evidence="2">Was originally thought to be a dihydrodipicolinate synthase (DHDPS), catalyzing the condensation of (S)-aspartate-beta-semialdehyde [(S)-ASA] and pyruvate to dihydrodipicolinate (DHDP). However, it was shown in E.coli that the product of the enzymatic reaction is not dihydrodipicolinate but in fact (4S)-4-hydroxy-2,3,4,5-tetrahydro-(2S)-dipicolinic acid (HTPA), and that the consecutive dehydration reaction leading to DHDP is not spontaneous but catalyzed by DapB.</text>
</comment>
<protein>
    <recommendedName>
        <fullName evidence="1">4-hydroxy-tetrahydrodipicolinate synthase</fullName>
        <shortName evidence="1">HTPA synthase</shortName>
        <ecNumber evidence="1">4.3.3.7</ecNumber>
    </recommendedName>
</protein>
<sequence length="292" mass="31067">MITGSLVAIVTPMHEDGSLDYPRLRSLIDFHVAEGTDGIVVVGTTGESPTVNVEEHCELIRTTVEHAAGRIPVIAGAGGNSTAEAIELASFAQEAGAVAQLSVVPYYNRPTQEGLYRHFRSIAEAVELPLILYNVPGRTVADLSNDTTLRLAEIPNIIGIKDATGSIDRACDLIERAPKDFALYTGDDMSAAAFILLGGHGTISVTANVAPRAMHEMCAAALAGEALRVREINGRLVGLHRDLFCEANPIPVKWAVARMGLIESGIRLPLTPLSSASQERVLLAMRRAGVNV</sequence>
<name>DAPA_AROAE</name>